<evidence type="ECO:0000250" key="1"/>
<evidence type="ECO:0000255" key="2"/>
<evidence type="ECO:0000255" key="3">
    <source>
        <dbReference type="PROSITE-ProRule" id="PRU00274"/>
    </source>
</evidence>
<evidence type="ECO:0000269" key="4">
    <source>
    </source>
</evidence>
<evidence type="ECO:0000305" key="5"/>
<protein>
    <recommendedName>
        <fullName>Hypodermin-B</fullName>
        <shortName>HB</shortName>
        <ecNumber>3.4.21.-</ecNumber>
    </recommendedName>
</protein>
<dbReference type="EC" id="3.4.21.-"/>
<dbReference type="EMBL" id="L24915">
    <property type="protein sequence ID" value="AAA29225.1"/>
    <property type="molecule type" value="mRNA"/>
</dbReference>
<dbReference type="PIR" id="A20190">
    <property type="entry name" value="A20190"/>
</dbReference>
<dbReference type="SMR" id="P35588"/>
<dbReference type="MEROPS" id="S01.090"/>
<dbReference type="GO" id="GO:0005576">
    <property type="term" value="C:extracellular region"/>
    <property type="evidence" value="ECO:0007669"/>
    <property type="project" value="UniProtKB-SubCell"/>
</dbReference>
<dbReference type="GO" id="GO:0004252">
    <property type="term" value="F:serine-type endopeptidase activity"/>
    <property type="evidence" value="ECO:0007669"/>
    <property type="project" value="InterPro"/>
</dbReference>
<dbReference type="GO" id="GO:0006508">
    <property type="term" value="P:proteolysis"/>
    <property type="evidence" value="ECO:0007669"/>
    <property type="project" value="UniProtKB-KW"/>
</dbReference>
<dbReference type="CDD" id="cd00190">
    <property type="entry name" value="Tryp_SPc"/>
    <property type="match status" value="1"/>
</dbReference>
<dbReference type="FunFam" id="2.40.10.10:FF:000077">
    <property type="entry name" value="Predicted protein"/>
    <property type="match status" value="1"/>
</dbReference>
<dbReference type="Gene3D" id="2.40.10.10">
    <property type="entry name" value="Trypsin-like serine proteases"/>
    <property type="match status" value="1"/>
</dbReference>
<dbReference type="InterPro" id="IPR050430">
    <property type="entry name" value="Peptidase_S1"/>
</dbReference>
<dbReference type="InterPro" id="IPR009003">
    <property type="entry name" value="Peptidase_S1_PA"/>
</dbReference>
<dbReference type="InterPro" id="IPR043504">
    <property type="entry name" value="Peptidase_S1_PA_chymotrypsin"/>
</dbReference>
<dbReference type="InterPro" id="IPR001314">
    <property type="entry name" value="Peptidase_S1A"/>
</dbReference>
<dbReference type="InterPro" id="IPR001254">
    <property type="entry name" value="Trypsin_dom"/>
</dbReference>
<dbReference type="InterPro" id="IPR018114">
    <property type="entry name" value="TRYPSIN_HIS"/>
</dbReference>
<dbReference type="InterPro" id="IPR033116">
    <property type="entry name" value="TRYPSIN_SER"/>
</dbReference>
<dbReference type="PANTHER" id="PTHR24276:SF91">
    <property type="entry name" value="AT26814P-RELATED"/>
    <property type="match status" value="1"/>
</dbReference>
<dbReference type="PANTHER" id="PTHR24276">
    <property type="entry name" value="POLYSERASE-RELATED"/>
    <property type="match status" value="1"/>
</dbReference>
<dbReference type="Pfam" id="PF00089">
    <property type="entry name" value="Trypsin"/>
    <property type="match status" value="1"/>
</dbReference>
<dbReference type="PRINTS" id="PR00722">
    <property type="entry name" value="CHYMOTRYPSIN"/>
</dbReference>
<dbReference type="SMART" id="SM00020">
    <property type="entry name" value="Tryp_SPc"/>
    <property type="match status" value="1"/>
</dbReference>
<dbReference type="SUPFAM" id="SSF50494">
    <property type="entry name" value="Trypsin-like serine proteases"/>
    <property type="match status" value="1"/>
</dbReference>
<dbReference type="PROSITE" id="PS50240">
    <property type="entry name" value="TRYPSIN_DOM"/>
    <property type="match status" value="1"/>
</dbReference>
<dbReference type="PROSITE" id="PS00134">
    <property type="entry name" value="TRYPSIN_HIS"/>
    <property type="match status" value="1"/>
</dbReference>
<dbReference type="PROSITE" id="PS00135">
    <property type="entry name" value="TRYPSIN_SER"/>
    <property type="match status" value="1"/>
</dbReference>
<accession>P35588</accession>
<proteinExistence type="evidence at protein level"/>
<reference key="1">
    <citation type="submission" date="1993-10" db="EMBL/GenBank/DDBJ databases">
        <title>Cloning, expression and immunogenicity of hypodermins A and B of Hypoderma lineatum.</title>
        <authorList>
            <person name="Kuhn I."/>
            <person name="Files J.G."/>
            <person name="Pruett J.H."/>
            <person name="Temeyer K.B."/>
        </authorList>
    </citation>
    <scope>NUCLEOTIDE SEQUENCE [MRNA]</scope>
</reference>
<reference key="2">
    <citation type="journal article" date="1983" name="Eur. J. Biochem.">
        <title>Hypodermin B, a trypsin-related enzyme from the insect Hypoderma lineatum. Comparison with hypodermin A and Hypoderma collagenase, two serine proteinases from the same source.</title>
        <authorList>
            <person name="Lecroisey A."/>
            <person name="Tong N.T."/>
            <person name="Keil B."/>
        </authorList>
    </citation>
    <scope>PROTEIN SEQUENCE OF 31-46</scope>
</reference>
<keyword id="KW-0903">Direct protein sequencing</keyword>
<keyword id="KW-1015">Disulfide bond</keyword>
<keyword id="KW-0378">Hydrolase</keyword>
<keyword id="KW-0645">Protease</keyword>
<keyword id="KW-0964">Secreted</keyword>
<keyword id="KW-0720">Serine protease</keyword>
<keyword id="KW-0732">Signal</keyword>
<keyword id="KW-0865">Zymogen</keyword>
<comment type="function">
    <text>Protease that shows preferential cleavage after Arg and Lys residues.</text>
</comment>
<comment type="subcellular location">
    <subcellularLocation>
        <location>Secreted</location>
    </subcellularLocation>
</comment>
<comment type="developmental stage">
    <text>Larval-specific.</text>
</comment>
<comment type="similarity">
    <text evidence="3">Belongs to the peptidase S1 family.</text>
</comment>
<sequence>MLKFVILVCSVACVFGAVVPGGMLPQLDGRIVGGFEADIEDFPWQVSIQRGGYHFCGGSIYSPEIIVTAAHCLEKIDASQLRVRVGGSYWDEEGSLLTVSNFKIHEKYDAMIMWYDVALLKLSSKLTYGATVKNIELAKETPPDNADAVVSGWGTIYENYPYMPVQLRSVDVKIVSREVCRSDEYGYGNAIGPTMICAYAVGKDACQGDSGGPLVVGEALVGVVSWGEGCAYPGFPGVYTDVSVVRSWITENAKSF</sequence>
<organism>
    <name type="scientific">Hypoderma lineatum</name>
    <name type="common">Early cattle grub</name>
    <name type="synonym">Common cattle grub</name>
    <dbReference type="NCBI Taxonomy" id="7389"/>
    <lineage>
        <taxon>Eukaryota</taxon>
        <taxon>Metazoa</taxon>
        <taxon>Ecdysozoa</taxon>
        <taxon>Arthropoda</taxon>
        <taxon>Hexapoda</taxon>
        <taxon>Insecta</taxon>
        <taxon>Pterygota</taxon>
        <taxon>Neoptera</taxon>
        <taxon>Endopterygota</taxon>
        <taxon>Diptera</taxon>
        <taxon>Brachycera</taxon>
        <taxon>Muscomorpha</taxon>
        <taxon>Oestroidea</taxon>
        <taxon>Oestridae</taxon>
        <taxon>Hypodermatinae</taxon>
        <taxon>Hypoderma</taxon>
    </lineage>
</organism>
<name>HYPB_HYPLI</name>
<feature type="signal peptide" evidence="2">
    <location>
        <begin position="1"/>
        <end position="22"/>
    </location>
</feature>
<feature type="propeptide" id="PRO_0000027919" description="Activation peptide" evidence="4">
    <location>
        <begin position="23"/>
        <end position="30"/>
    </location>
</feature>
<feature type="chain" id="PRO_0000027920" description="Hypodermin-B">
    <location>
        <begin position="31"/>
        <end position="256"/>
    </location>
</feature>
<feature type="domain" description="Peptidase S1" evidence="3">
    <location>
        <begin position="31"/>
        <end position="254"/>
    </location>
</feature>
<feature type="active site" description="Charge relay system" evidence="1">
    <location>
        <position position="71"/>
    </location>
</feature>
<feature type="active site" description="Charge relay system" evidence="1">
    <location>
        <position position="116"/>
    </location>
</feature>
<feature type="active site" description="Charge relay system" evidence="1">
    <location>
        <position position="210"/>
    </location>
</feature>
<feature type="site" description="Required for specificity" evidence="1">
    <location>
        <position position="204"/>
    </location>
</feature>
<feature type="disulfide bond" evidence="3">
    <location>
        <begin position="56"/>
        <end position="72"/>
    </location>
</feature>
<feature type="disulfide bond" evidence="3">
    <location>
        <begin position="180"/>
        <end position="197"/>
    </location>
</feature>
<feature type="disulfide bond" evidence="3">
    <location>
        <begin position="206"/>
        <end position="230"/>
    </location>
</feature>
<feature type="sequence conflict" description="In Ref. 2; AA sequence." evidence="5" ref="2">
    <original>Q</original>
    <variation>E</variation>
    <location>
        <position position="45"/>
    </location>
</feature>